<accession>A0A2Z6FZ31</accession>
<protein>
    <recommendedName>
        <fullName evidence="9">Sesterterpene synthase btcA</fullName>
        <shortName evidence="9">TS</shortName>
    </recommendedName>
    <alternativeName>
        <fullName evidence="9">Betaestacins biosynthesis cluster protein A</fullName>
    </alternativeName>
    <domain>
        <recommendedName>
            <fullName evidence="9">Terpene cyclase</fullName>
            <ecNumber evidence="7">4.2.3.-</ecNumber>
        </recommendedName>
    </domain>
    <domain>
        <recommendedName>
            <fullName evidence="9">Geranylgeranyl diphosphate synthase</fullName>
            <shortName evidence="9">GGDP synthase</shortName>
            <shortName evidence="9">GGS</shortName>
            <ecNumber evidence="7">2.5.1.29</ecNumber>
        </recommendedName>
    </domain>
    <domain>
        <recommendedName>
            <fullName evidence="9">Geranylfarnesyl diphosphate synthase</fullName>
            <shortName evidence="9">GFDP synthase</shortName>
            <ecNumber evidence="7">2.5.1.81</ecNumber>
        </recommendedName>
    </domain>
</protein>
<sequence>MANPPVTEWKQSEAIPAHVAQETGCFTTLPIRIHKNNSIADQATLESINDWKQHLDDGWESRSGSAISKVGNWCSFIFSEALPERLPCITYLANIGNIHDDATEDATLDEAITSHAQFSTALSLDTDDEPSLQEAKTRRFRHLVSNCVLEILSIDRDMGTRMIVSYQKKWLDVMEHLNYEGIESLEEYLEFRMLNGGMEPFWLMCQFGMGLNIPDAELAPTRHIFEPAEWALVLTNDYWSWGREYNASLTKGSRIVNSIELLSRLRNISYDEAKEVVRDLITTYEAEYERRVQDFLRENPSTQMYLRQFIEVAGLVVAGNHYWCANCPRHHAWKEQDQAVHAVDQLEEFPAVEAQSPSSATHTAAPQEDPPVTEAPSPISSPSSSSSAKPSSSSAADSSSCTSTSQHSPSETDSTPPSSLHLLKSPHPVDAPCTYMSSLPSKGVRSTLIHALNQWFQISSRNVTLIKEITSMLHNSSLILDDIQDQSPLRRGKPAAHTIFSTAQSINSSTYLFVRAMQMVSENFESSVQMSFLEILQRMHIGQSYDLHWRFHLQCPTEDEYFEMVDAKTGCMFEMLLLLMSSKSRHVKDHSFTSFIRTFGRYFQVRDDYMNLTSGEYTAGKGWCEDLDEGKLSYPLIECQKMAPASFTQIMGIFRAKQADTAQLSDETKKYVIELFRKSGVLDSTLDWIMEMERQLLMEVKRLEGVMGDSNPMLYVLLQTLSLNQ</sequence>
<proteinExistence type="evidence at protein level"/>
<reference key="1">
    <citation type="journal article" date="2017" name="Org. Lett.">
        <title>Focused genome mining of structurally related sesterterpenes: enzymatic formation of enantiomeric and diastereomeric products.</title>
        <authorList>
            <person name="Narita K."/>
            <person name="Sato H."/>
            <person name="Minami A."/>
            <person name="Kudo K."/>
            <person name="Gao L."/>
            <person name="Liu C."/>
            <person name="Ozaki T."/>
            <person name="Kodama M."/>
            <person name="Lei X."/>
            <person name="Taniguchi T."/>
            <person name="Monde K."/>
            <person name="Yamazaki M."/>
            <person name="Uchiyama M."/>
            <person name="Oikawa H."/>
        </authorList>
    </citation>
    <scope>NUCLEOTIDE SEQUENCE [GENOMIC DNA]</scope>
    <scope>FUNCTION</scope>
    <scope>CATALYTIC ACTIVITY</scope>
    <source>
        <strain>PS-13</strain>
    </source>
</reference>
<reference key="2">
    <citation type="journal article" date="2018" name="Tetrahedron Lett.">
        <title>Identification of novel sesterterpenes by genome mining of phytopathogenic fungi Phoma and Colletotrichum sp.</title>
        <authorList>
            <person name="Gao L."/>
            <person name="Narita K."/>
            <person name="Ozaki T."/>
            <person name="Kamukara N."/>
            <person name="Gan P."/>
            <person name="Minami A."/>
            <person name="Liu C."/>
            <person name="Lei X."/>
            <person name="Shirasu K."/>
            <person name="Oikawa H."/>
        </authorList>
    </citation>
    <scope>FUNCTION</scope>
    <scope>CATALYTIC ACTIVITY</scope>
    <scope>PATHWAY</scope>
</reference>
<gene>
    <name evidence="9" type="primary">btcA</name>
    <name evidence="9" type="synonym">PbTS</name>
</gene>
<dbReference type="EC" id="4.2.3.-" evidence="7"/>
<dbReference type="EC" id="2.5.1.29" evidence="7"/>
<dbReference type="EC" id="2.5.1.81" evidence="7"/>
<dbReference type="EMBL" id="LC274619">
    <property type="protein sequence ID" value="BBE36502.1"/>
    <property type="molecule type" value="Genomic_DNA"/>
</dbReference>
<dbReference type="SMR" id="A0A2Z6FZ31"/>
<dbReference type="UniPathway" id="UPA00213"/>
<dbReference type="GO" id="GO:0016829">
    <property type="term" value="F:lyase activity"/>
    <property type="evidence" value="ECO:0007669"/>
    <property type="project" value="UniProtKB-KW"/>
</dbReference>
<dbReference type="GO" id="GO:0046872">
    <property type="term" value="F:metal ion binding"/>
    <property type="evidence" value="ECO:0007669"/>
    <property type="project" value="UniProtKB-KW"/>
</dbReference>
<dbReference type="GO" id="GO:0004659">
    <property type="term" value="F:prenyltransferase activity"/>
    <property type="evidence" value="ECO:0007669"/>
    <property type="project" value="InterPro"/>
</dbReference>
<dbReference type="GO" id="GO:0046165">
    <property type="term" value="P:alcohol biosynthetic process"/>
    <property type="evidence" value="ECO:0007669"/>
    <property type="project" value="UniProtKB-ARBA"/>
</dbReference>
<dbReference type="GO" id="GO:0043386">
    <property type="term" value="P:mycotoxin biosynthetic process"/>
    <property type="evidence" value="ECO:0007669"/>
    <property type="project" value="UniProtKB-ARBA"/>
</dbReference>
<dbReference type="GO" id="GO:0016114">
    <property type="term" value="P:terpenoid biosynthetic process"/>
    <property type="evidence" value="ECO:0007669"/>
    <property type="project" value="UniProtKB-UniPathway"/>
</dbReference>
<dbReference type="CDD" id="cd00685">
    <property type="entry name" value="Trans_IPPS_HT"/>
    <property type="match status" value="1"/>
</dbReference>
<dbReference type="Gene3D" id="1.10.600.10">
    <property type="entry name" value="Farnesyl Diphosphate Synthase"/>
    <property type="match status" value="2"/>
</dbReference>
<dbReference type="InterPro" id="IPR008949">
    <property type="entry name" value="Isoprenoid_synthase_dom_sf"/>
</dbReference>
<dbReference type="InterPro" id="IPR000092">
    <property type="entry name" value="Polyprenyl_synt"/>
</dbReference>
<dbReference type="InterPro" id="IPR033749">
    <property type="entry name" value="Polyprenyl_synt_CS"/>
</dbReference>
<dbReference type="PANTHER" id="PTHR12001">
    <property type="entry name" value="GERANYLGERANYL PYROPHOSPHATE SYNTHASE"/>
    <property type="match status" value="1"/>
</dbReference>
<dbReference type="PANTHER" id="PTHR12001:SF72">
    <property type="entry name" value="THIJ_PFPI FAMILY PROTEIN (AFU_ORTHOLOGUE AFUA_3G01210)-RELATED"/>
    <property type="match status" value="1"/>
</dbReference>
<dbReference type="Pfam" id="PF00348">
    <property type="entry name" value="polyprenyl_synt"/>
    <property type="match status" value="1"/>
</dbReference>
<dbReference type="Pfam" id="PF19086">
    <property type="entry name" value="Terpene_syn_C_2"/>
    <property type="match status" value="1"/>
</dbReference>
<dbReference type="SFLD" id="SFLDS00005">
    <property type="entry name" value="Isoprenoid_Synthase_Type_I"/>
    <property type="match status" value="1"/>
</dbReference>
<dbReference type="SUPFAM" id="SSF48576">
    <property type="entry name" value="Terpenoid synthases"/>
    <property type="match status" value="2"/>
</dbReference>
<dbReference type="PROSITE" id="PS00723">
    <property type="entry name" value="POLYPRENYL_SYNTHASE_1"/>
    <property type="match status" value="1"/>
</dbReference>
<dbReference type="PROSITE" id="PS00444">
    <property type="entry name" value="POLYPRENYL_SYNTHASE_2"/>
    <property type="match status" value="1"/>
</dbReference>
<comment type="function">
    <text evidence="7 8 11">Bifunctional terpene synthase; part of the gene cluster that mediates the biosynthesis of betaestacins (PubMed:29185768, Ref.2). The bifunctional terpene synthase btcA converts isopentenyl diphosphate (IPP) and dimethylallyl diphosphate (DMAPP) into the sesterterpene betaestacin I (PubMed:29185768, Ref.2). The C-terminal prenyltransferase (PT) domain of btcA catalyzes formation of GFPP, whereas the N-terminal terpene cyclase (TC) domain catalyzes the cyclization of GFPP into betaestacin I (PubMed:29185768, Ref.2). The cytochrome P450 monooxygenase btcB is then responsible for the six-step oxidation of betaestacin I to yield betaestacin II (Ref.2). The roles of the cytochrome P450 monooxygenase btcC and the alpha-ketoglutarate-dependent dioxygenase btcD have not been identified yet (Probable).</text>
</comment>
<comment type="catalytic activity">
    <reaction evidence="7">
        <text>isopentenyl diphosphate + (2E,6E)-farnesyl diphosphate = (2E,6E,10E)-geranylgeranyl diphosphate + diphosphate</text>
        <dbReference type="Rhea" id="RHEA:17653"/>
        <dbReference type="ChEBI" id="CHEBI:33019"/>
        <dbReference type="ChEBI" id="CHEBI:58756"/>
        <dbReference type="ChEBI" id="CHEBI:128769"/>
        <dbReference type="ChEBI" id="CHEBI:175763"/>
        <dbReference type="EC" id="2.5.1.29"/>
    </reaction>
    <physiologicalReaction direction="left-to-right" evidence="7">
        <dbReference type="Rhea" id="RHEA:17654"/>
    </physiologicalReaction>
</comment>
<comment type="catalytic activity">
    <reaction evidence="7">
        <text>isopentenyl diphosphate + (2E,6E,10E)-geranylgeranyl diphosphate = (2E,6E,10E,14E)-geranylfarnesyl diphosphate + diphosphate</text>
        <dbReference type="Rhea" id="RHEA:25694"/>
        <dbReference type="ChEBI" id="CHEBI:33019"/>
        <dbReference type="ChEBI" id="CHEBI:57907"/>
        <dbReference type="ChEBI" id="CHEBI:58756"/>
        <dbReference type="ChEBI" id="CHEBI:128769"/>
        <dbReference type="EC" id="2.5.1.81"/>
    </reaction>
    <physiologicalReaction direction="left-to-right" evidence="7">
        <dbReference type="Rhea" id="RHEA:25695"/>
    </physiologicalReaction>
</comment>
<comment type="cofactor">
    <cofactor evidence="3">
        <name>Mg(2+)</name>
        <dbReference type="ChEBI" id="CHEBI:18420"/>
    </cofactor>
</comment>
<comment type="pathway">
    <text evidence="7">Secondary metabolite biosynthesis; terpenoid biosynthesis.</text>
</comment>
<comment type="subunit">
    <text evidence="1">Hexamer.</text>
</comment>
<comment type="domain">
    <text evidence="2">The conserved DDXXD motifs as well as the NSE/DTE motif are important for the catalytic activity, presumably through binding to Mg(2+).</text>
</comment>
<comment type="similarity">
    <text evidence="10">In the N-terminal section; belongs to the terpene synthase family.</text>
</comment>
<comment type="similarity">
    <text evidence="10">In the C-terminal section; belongs to the FPP/GGPP synthase family.</text>
</comment>
<feature type="chain" id="PRO_0000453701" description="Sesterterpene synthase btcA">
    <location>
        <begin position="1"/>
        <end position="725"/>
    </location>
</feature>
<feature type="region of interest" description="Terpene cyclase" evidence="2">
    <location>
        <begin position="1"/>
        <end position="333"/>
    </location>
</feature>
<feature type="region of interest" description="Prenyltransferase" evidence="2">
    <location>
        <begin position="334"/>
        <end position="722"/>
    </location>
</feature>
<feature type="region of interest" description="Disordered" evidence="6">
    <location>
        <begin position="352"/>
        <end position="426"/>
    </location>
</feature>
<feature type="short sequence motif" description="DDXXD 1" evidence="2">
    <location>
        <begin position="100"/>
        <end position="104"/>
    </location>
</feature>
<feature type="short sequence motif" description="NSE/DTE" evidence="2">
    <location>
        <begin position="236"/>
        <end position="244"/>
    </location>
</feature>
<feature type="short sequence motif" description="DDXXD 2" evidence="2">
    <location>
        <begin position="481"/>
        <end position="485"/>
    </location>
</feature>
<feature type="compositionally biased region" description="Polar residues" evidence="6">
    <location>
        <begin position="355"/>
        <end position="364"/>
    </location>
</feature>
<feature type="compositionally biased region" description="Low complexity" evidence="6">
    <location>
        <begin position="375"/>
        <end position="419"/>
    </location>
</feature>
<feature type="binding site" evidence="5">
    <location>
        <position position="100"/>
    </location>
    <ligand>
        <name>Mg(2+)</name>
        <dbReference type="ChEBI" id="CHEBI:18420"/>
        <label>1</label>
    </ligand>
</feature>
<feature type="binding site" evidence="5">
    <location>
        <position position="100"/>
    </location>
    <ligand>
        <name>Mg(2+)</name>
        <dbReference type="ChEBI" id="CHEBI:18420"/>
        <label>2</label>
    </ligand>
</feature>
<feature type="binding site" evidence="1">
    <location>
        <position position="100"/>
    </location>
    <ligand>
        <name>substrate</name>
    </ligand>
</feature>
<feature type="binding site" evidence="1">
    <location>
        <position position="236"/>
    </location>
    <ligand>
        <name>substrate</name>
    </ligand>
</feature>
<feature type="binding site" evidence="1">
    <location>
        <begin position="240"/>
        <end position="244"/>
    </location>
    <ligand>
        <name>substrate</name>
    </ligand>
</feature>
<feature type="binding site" evidence="1">
    <location>
        <begin position="329"/>
        <end position="330"/>
    </location>
    <ligand>
        <name>substrate</name>
    </ligand>
</feature>
<feature type="binding site" evidence="4">
    <location>
        <position position="442"/>
    </location>
    <ligand>
        <name>isopentenyl diphosphate</name>
        <dbReference type="ChEBI" id="CHEBI:128769"/>
    </ligand>
</feature>
<feature type="binding site" evidence="4">
    <location>
        <position position="445"/>
    </location>
    <ligand>
        <name>isopentenyl diphosphate</name>
        <dbReference type="ChEBI" id="CHEBI:128769"/>
    </ligand>
</feature>
<feature type="binding site" evidence="4">
    <location>
        <position position="474"/>
    </location>
    <ligand>
        <name>isopentenyl diphosphate</name>
        <dbReference type="ChEBI" id="CHEBI:128769"/>
    </ligand>
</feature>
<feature type="binding site" evidence="4">
    <location>
        <position position="481"/>
    </location>
    <ligand>
        <name>Mg(2+)</name>
        <dbReference type="ChEBI" id="CHEBI:18420"/>
        <label>3</label>
    </ligand>
</feature>
<feature type="binding site" evidence="4">
    <location>
        <position position="481"/>
    </location>
    <ligand>
        <name>Mg(2+)</name>
        <dbReference type="ChEBI" id="CHEBI:18420"/>
        <label>4</label>
    </ligand>
</feature>
<feature type="binding site" evidence="4">
    <location>
        <position position="485"/>
    </location>
    <ligand>
        <name>Mg(2+)</name>
        <dbReference type="ChEBI" id="CHEBI:18420"/>
        <label>3</label>
    </ligand>
</feature>
<feature type="binding site" evidence="4">
    <location>
        <position position="485"/>
    </location>
    <ligand>
        <name>Mg(2+)</name>
        <dbReference type="ChEBI" id="CHEBI:18420"/>
        <label>4</label>
    </ligand>
</feature>
<feature type="binding site" evidence="4">
    <location>
        <position position="490"/>
    </location>
    <ligand>
        <name>dimethylallyl diphosphate</name>
        <dbReference type="ChEBI" id="CHEBI:57623"/>
    </ligand>
</feature>
<feature type="binding site" evidence="4">
    <location>
        <position position="491"/>
    </location>
    <ligand>
        <name>isopentenyl diphosphate</name>
        <dbReference type="ChEBI" id="CHEBI:128769"/>
    </ligand>
</feature>
<feature type="binding site" evidence="4">
    <location>
        <position position="568"/>
    </location>
    <ligand>
        <name>dimethylallyl diphosphate</name>
        <dbReference type="ChEBI" id="CHEBI:57623"/>
    </ligand>
</feature>
<feature type="binding site" evidence="4">
    <location>
        <position position="569"/>
    </location>
    <ligand>
        <name>dimethylallyl diphosphate</name>
        <dbReference type="ChEBI" id="CHEBI:57623"/>
    </ligand>
</feature>
<feature type="binding site" evidence="4">
    <location>
        <position position="604"/>
    </location>
    <ligand>
        <name>dimethylallyl diphosphate</name>
        <dbReference type="ChEBI" id="CHEBI:57623"/>
    </ligand>
</feature>
<feature type="binding site" evidence="4">
    <location>
        <position position="611"/>
    </location>
    <ligand>
        <name>dimethylallyl diphosphate</name>
        <dbReference type="ChEBI" id="CHEBI:57623"/>
    </ligand>
</feature>
<feature type="binding site" evidence="4">
    <location>
        <position position="621"/>
    </location>
    <ligand>
        <name>dimethylallyl diphosphate</name>
        <dbReference type="ChEBI" id="CHEBI:57623"/>
    </ligand>
</feature>
<feature type="binding site" evidence="4">
    <location>
        <position position="631"/>
    </location>
    <ligand>
        <name>dimethylallyl diphosphate</name>
        <dbReference type="ChEBI" id="CHEBI:57623"/>
    </ligand>
</feature>
<name>BTCA_NEOBT</name>
<keyword id="KW-0414">Isoprene biosynthesis</keyword>
<keyword id="KW-0456">Lyase</keyword>
<keyword id="KW-0460">Magnesium</keyword>
<keyword id="KW-0479">Metal-binding</keyword>
<keyword id="KW-0511">Multifunctional enzyme</keyword>
<keyword id="KW-0677">Repeat</keyword>
<keyword id="KW-0808">Transferase</keyword>
<organism>
    <name type="scientific">Neocamarosporium betae</name>
    <name type="common">Beet black rot fungus</name>
    <name type="synonym">Pleospora betae</name>
    <dbReference type="NCBI Taxonomy" id="1979465"/>
    <lineage>
        <taxon>Eukaryota</taxon>
        <taxon>Fungi</taxon>
        <taxon>Dikarya</taxon>
        <taxon>Ascomycota</taxon>
        <taxon>Pezizomycotina</taxon>
        <taxon>Dothideomycetes</taxon>
        <taxon>Pleosporomycetidae</taxon>
        <taxon>Pleosporales</taxon>
        <taxon>Pleosporineae</taxon>
        <taxon>Pleosporaceae</taxon>
        <taxon>Neocamarosporium</taxon>
    </lineage>
</organism>
<evidence type="ECO:0000250" key="1">
    <source>
        <dbReference type="UniProtKB" id="A2PZA5"/>
    </source>
</evidence>
<evidence type="ECO:0000250" key="2">
    <source>
        <dbReference type="UniProtKB" id="P9WEP0"/>
    </source>
</evidence>
<evidence type="ECO:0000250" key="3">
    <source>
        <dbReference type="UniProtKB" id="P9WEV7"/>
    </source>
</evidence>
<evidence type="ECO:0000250" key="4">
    <source>
        <dbReference type="UniProtKB" id="Q12051"/>
    </source>
</evidence>
<evidence type="ECO:0000250" key="5">
    <source>
        <dbReference type="UniProtKB" id="Q40577"/>
    </source>
</evidence>
<evidence type="ECO:0000256" key="6">
    <source>
        <dbReference type="SAM" id="MobiDB-lite"/>
    </source>
</evidence>
<evidence type="ECO:0000269" key="7">
    <source>
    </source>
</evidence>
<evidence type="ECO:0000269" key="8">
    <source ref="2"/>
</evidence>
<evidence type="ECO:0000303" key="9">
    <source>
    </source>
</evidence>
<evidence type="ECO:0000305" key="10"/>
<evidence type="ECO:0000305" key="11">
    <source ref="2"/>
</evidence>